<evidence type="ECO:0000305" key="1"/>
<reference key="1">
    <citation type="journal article" date="2002" name="Proc. Natl. Acad. Sci. U.S.A.">
        <title>The complete genome of hyperthermophile Methanopyrus kandleri AV19 and monophyly of archaeal methanogens.</title>
        <authorList>
            <person name="Slesarev A.I."/>
            <person name="Mezhevaya K.V."/>
            <person name="Makarova K.S."/>
            <person name="Polushin N.N."/>
            <person name="Shcherbinina O.V."/>
            <person name="Shakhova V.V."/>
            <person name="Belova G.I."/>
            <person name="Aravind L."/>
            <person name="Natale D.A."/>
            <person name="Rogozin I.B."/>
            <person name="Tatusov R.L."/>
            <person name="Wolf Y.I."/>
            <person name="Stetter K.O."/>
            <person name="Malykh A.G."/>
            <person name="Koonin E.V."/>
            <person name="Kozyavkin S.A."/>
        </authorList>
    </citation>
    <scope>NUCLEOTIDE SEQUENCE [LARGE SCALE GENOMIC DNA]</scope>
    <source>
        <strain>AV19 / DSM 6324 / JCM 9639 / NBRC 100938</strain>
    </source>
</reference>
<sequence length="254" mass="27505">MRVGIALSGDVPGAAERVLEAVERADVDVVVYHNVELDADVEEVRAKDPGRALVEDLVEGRLDAAVRGAVSGRCVRELVDALDLPFTGRSTVLEAEGRRVLLAPVGIDEGWEVESLVKLGELAARFHRRLTRREPSVAVVSSGRLEDFGRRSEIDRWLADGELVARLLKERGMEVEHVGILVEEALERDVVLFVNGVLGNLTFRCLSLVAGFRSHGAPVLAALERGVVFVDTSRAQRASGYARALRLAAELAGG</sequence>
<organism>
    <name type="scientific">Methanopyrus kandleri (strain AV19 / DSM 6324 / JCM 9639 / NBRC 100938)</name>
    <dbReference type="NCBI Taxonomy" id="190192"/>
    <lineage>
        <taxon>Archaea</taxon>
        <taxon>Methanobacteriati</taxon>
        <taxon>Methanobacteriota</taxon>
        <taxon>Methanomada group</taxon>
        <taxon>Methanopyri</taxon>
        <taxon>Methanopyrales</taxon>
        <taxon>Methanopyraceae</taxon>
        <taxon>Methanopyrus</taxon>
    </lineage>
</organism>
<dbReference type="EC" id="2.1.1.-"/>
<dbReference type="EMBL" id="AE009439">
    <property type="protein sequence ID" value="AAM02154.1"/>
    <property type="molecule type" value="Genomic_DNA"/>
</dbReference>
<dbReference type="RefSeq" id="WP_011019309.1">
    <property type="nucleotide sequence ID" value="NC_003551.1"/>
</dbReference>
<dbReference type="SMR" id="Q8TWU1"/>
<dbReference type="FunCoup" id="Q8TWU1">
    <property type="interactions" value="1"/>
</dbReference>
<dbReference type="STRING" id="190192.MK0941"/>
<dbReference type="PaxDb" id="190192-MK0941"/>
<dbReference type="EnsemblBacteria" id="AAM02154">
    <property type="protein sequence ID" value="AAM02154"/>
    <property type="gene ID" value="MK0941"/>
</dbReference>
<dbReference type="GeneID" id="1477042"/>
<dbReference type="KEGG" id="mka:MK0941"/>
<dbReference type="HOGENOM" id="CLU_086562_0_0_2"/>
<dbReference type="InParanoid" id="Q8TWU1"/>
<dbReference type="OrthoDB" id="53227at2157"/>
<dbReference type="Proteomes" id="UP000001826">
    <property type="component" value="Chromosome"/>
</dbReference>
<dbReference type="GO" id="GO:0008168">
    <property type="term" value="F:methyltransferase activity"/>
    <property type="evidence" value="ECO:0007669"/>
    <property type="project" value="UniProtKB-KW"/>
</dbReference>
<dbReference type="GO" id="GO:0032259">
    <property type="term" value="P:methylation"/>
    <property type="evidence" value="ECO:0007669"/>
    <property type="project" value="UniProtKB-KW"/>
</dbReference>
<dbReference type="InterPro" id="IPR016764">
    <property type="entry name" value="MeTrfase_MtxX_xsu"/>
</dbReference>
<dbReference type="NCBIfam" id="TIGR03270">
    <property type="entry name" value="methan_mark_4"/>
    <property type="match status" value="1"/>
</dbReference>
<dbReference type="PIRSF" id="PIRSF019709">
    <property type="entry name" value="Methyltransf_MtxX"/>
    <property type="match status" value="1"/>
</dbReference>
<dbReference type="SUPFAM" id="SSF53659">
    <property type="entry name" value="Isocitrate/Isopropylmalate dehydrogenase-like"/>
    <property type="match status" value="1"/>
</dbReference>
<feature type="chain" id="PRO_0000135934" description="Uncharacterized methyltransferase MK0941">
    <location>
        <begin position="1"/>
        <end position="254"/>
    </location>
</feature>
<name>Y941_METKA</name>
<comment type="similarity">
    <text evidence="1">Belongs to the MtxX family.</text>
</comment>
<gene>
    <name type="ordered locus">MK0941</name>
</gene>
<keyword id="KW-0489">Methyltransferase</keyword>
<keyword id="KW-1185">Reference proteome</keyword>
<keyword id="KW-0808">Transferase</keyword>
<accession>Q8TWU1</accession>
<protein>
    <recommendedName>
        <fullName>Uncharacterized methyltransferase MK0941</fullName>
        <ecNumber>2.1.1.-</ecNumber>
    </recommendedName>
</protein>
<proteinExistence type="inferred from homology"/>